<organism>
    <name type="scientific">Aspergillus fumigatus (strain ATCC MYA-4609 / CBS 101355 / FGSC A1100 / Af293)</name>
    <name type="common">Neosartorya fumigata</name>
    <dbReference type="NCBI Taxonomy" id="330879"/>
    <lineage>
        <taxon>Eukaryota</taxon>
        <taxon>Fungi</taxon>
        <taxon>Dikarya</taxon>
        <taxon>Ascomycota</taxon>
        <taxon>Pezizomycotina</taxon>
        <taxon>Eurotiomycetes</taxon>
        <taxon>Eurotiomycetidae</taxon>
        <taxon>Eurotiales</taxon>
        <taxon>Aspergillaceae</taxon>
        <taxon>Aspergillus</taxon>
        <taxon>Aspergillus subgen. Fumigati</taxon>
    </lineage>
</organism>
<accession>Q4WD45</accession>
<keyword id="KW-0067">ATP-binding</keyword>
<keyword id="KW-0436">Ligase</keyword>
<keyword id="KW-0460">Magnesium</keyword>
<keyword id="KW-0464">Manganese</keyword>
<keyword id="KW-0479">Metal-binding</keyword>
<keyword id="KW-0547">Nucleotide-binding</keyword>
<keyword id="KW-1185">Reference proteome</keyword>
<reference key="1">
    <citation type="journal article" date="2005" name="Nature">
        <title>Genomic sequence of the pathogenic and allergenic filamentous fungus Aspergillus fumigatus.</title>
        <authorList>
            <person name="Nierman W.C."/>
            <person name="Pain A."/>
            <person name="Anderson M.J."/>
            <person name="Wortman J.R."/>
            <person name="Kim H.S."/>
            <person name="Arroyo J."/>
            <person name="Berriman M."/>
            <person name="Abe K."/>
            <person name="Archer D.B."/>
            <person name="Bermejo C."/>
            <person name="Bennett J.W."/>
            <person name="Bowyer P."/>
            <person name="Chen D."/>
            <person name="Collins M."/>
            <person name="Coulsen R."/>
            <person name="Davies R."/>
            <person name="Dyer P.S."/>
            <person name="Farman M.L."/>
            <person name="Fedorova N."/>
            <person name="Fedorova N.D."/>
            <person name="Feldblyum T.V."/>
            <person name="Fischer R."/>
            <person name="Fosker N."/>
            <person name="Fraser A."/>
            <person name="Garcia J.L."/>
            <person name="Garcia M.J."/>
            <person name="Goble A."/>
            <person name="Goldman G.H."/>
            <person name="Gomi K."/>
            <person name="Griffith-Jones S."/>
            <person name="Gwilliam R."/>
            <person name="Haas B.J."/>
            <person name="Haas H."/>
            <person name="Harris D.E."/>
            <person name="Horiuchi H."/>
            <person name="Huang J."/>
            <person name="Humphray S."/>
            <person name="Jimenez J."/>
            <person name="Keller N."/>
            <person name="Khouri H."/>
            <person name="Kitamoto K."/>
            <person name="Kobayashi T."/>
            <person name="Konzack S."/>
            <person name="Kulkarni R."/>
            <person name="Kumagai T."/>
            <person name="Lafton A."/>
            <person name="Latge J.-P."/>
            <person name="Li W."/>
            <person name="Lord A."/>
            <person name="Lu C."/>
            <person name="Majoros W.H."/>
            <person name="May G.S."/>
            <person name="Miller B.L."/>
            <person name="Mohamoud Y."/>
            <person name="Molina M."/>
            <person name="Monod M."/>
            <person name="Mouyna I."/>
            <person name="Mulligan S."/>
            <person name="Murphy L.D."/>
            <person name="O'Neil S."/>
            <person name="Paulsen I."/>
            <person name="Penalva M.A."/>
            <person name="Pertea M."/>
            <person name="Price C."/>
            <person name="Pritchard B.L."/>
            <person name="Quail M.A."/>
            <person name="Rabbinowitsch E."/>
            <person name="Rawlins N."/>
            <person name="Rajandream M.A."/>
            <person name="Reichard U."/>
            <person name="Renauld H."/>
            <person name="Robson G.D."/>
            <person name="Rodriguez de Cordoba S."/>
            <person name="Rodriguez-Pena J.M."/>
            <person name="Ronning C.M."/>
            <person name="Rutter S."/>
            <person name="Salzberg S.L."/>
            <person name="Sanchez M."/>
            <person name="Sanchez-Ferrero J.C."/>
            <person name="Saunders D."/>
            <person name="Seeger K."/>
            <person name="Squares R."/>
            <person name="Squares S."/>
            <person name="Takeuchi M."/>
            <person name="Tekaia F."/>
            <person name="Turner G."/>
            <person name="Vazquez de Aldana C.R."/>
            <person name="Weidman J."/>
            <person name="White O."/>
            <person name="Woodward J.R."/>
            <person name="Yu J.-H."/>
            <person name="Fraser C.M."/>
            <person name="Galagan J.E."/>
            <person name="Asai K."/>
            <person name="Machida M."/>
            <person name="Hall N."/>
            <person name="Barrell B.G."/>
            <person name="Denning D.W."/>
        </authorList>
    </citation>
    <scope>NUCLEOTIDE SEQUENCE [LARGE SCALE GENOMIC DNA]</scope>
    <source>
        <strain>ATCC MYA-4609 / CBS 101355 / FGSC A1100 / Af293</strain>
    </source>
</reference>
<reference key="2">
    <citation type="journal article" date="2015" name="Mol. Microbiol.">
        <title>Transcriptome analysis of cyclic AMP-dependent protein kinase A-regulated genes reveals the production of the novel natural compound fumipyrrole by Aspergillus fumigatus.</title>
        <authorList>
            <person name="Macheleidt J."/>
            <person name="Scherlach K."/>
            <person name="Neuwirth T."/>
            <person name="Schmidt-Heck W."/>
            <person name="Strassburger M."/>
            <person name="Spraker J."/>
            <person name="Baccile J.A."/>
            <person name="Schroeder F.C."/>
            <person name="Keller N.P."/>
            <person name="Hertweck C."/>
            <person name="Heinekamp T."/>
            <person name="Brakhage A.A."/>
        </authorList>
    </citation>
    <scope>FUNCTION</scope>
    <scope>INDUCTION</scope>
</reference>
<reference key="3">
    <citation type="journal article" date="2016" name="Nat. Chem. Biol.">
        <title>Plant-like biosynthesis of isoquinoline alkaloids in Aspergillus fumigatus.</title>
        <authorList>
            <person name="Baccile J.A."/>
            <person name="Spraker J.E."/>
            <person name="Le H.H."/>
            <person name="Brandenburger E."/>
            <person name="Gomez C."/>
            <person name="Bok J.W."/>
            <person name="Macheleidt J."/>
            <person name="Brakhage A.A."/>
            <person name="Hoffmeister D."/>
            <person name="Keller N.P."/>
            <person name="Schroeder F.C."/>
        </authorList>
    </citation>
    <scope>FUNCTION</scope>
</reference>
<reference key="4">
    <citation type="journal article" date="2018" name="J. Biol. Chem.">
        <title>Oxidative cyclization of N-methyl-dopa by a fungal flavoenzyme of the amine oxidase family.</title>
        <authorList>
            <person name="Lahham M."/>
            <person name="Pavkov-Keller T."/>
            <person name="Fuchs M."/>
            <person name="Niederhauser J."/>
            <person name="Chalhoub G."/>
            <person name="Daniel B."/>
            <person name="Kroutil W."/>
            <person name="Gruber K."/>
            <person name="Macheroux P."/>
        </authorList>
    </citation>
    <scope>FUNCTION</scope>
</reference>
<dbReference type="EC" id="6.3.2.-" evidence="8"/>
<dbReference type="EMBL" id="AAHF01000012">
    <property type="protein sequence ID" value="EAL85693.1"/>
    <property type="molecule type" value="Genomic_DNA"/>
</dbReference>
<dbReference type="RefSeq" id="XP_747731.1">
    <property type="nucleotide sequence ID" value="XM_742638.1"/>
</dbReference>
<dbReference type="SMR" id="Q4WD45"/>
<dbReference type="STRING" id="330879.Q4WD45"/>
<dbReference type="EnsemblFungi" id="EAL85693">
    <property type="protein sequence ID" value="EAL85693"/>
    <property type="gene ID" value="AFUA_6G03460"/>
</dbReference>
<dbReference type="GeneID" id="3505178"/>
<dbReference type="KEGG" id="afm:AFUA_6G03460"/>
<dbReference type="eggNOG" id="ENOG502QT0U">
    <property type="taxonomic scope" value="Eukaryota"/>
</dbReference>
<dbReference type="HOGENOM" id="CLU_017280_0_0_1"/>
<dbReference type="InParanoid" id="Q4WD45"/>
<dbReference type="OMA" id="WREAFIP"/>
<dbReference type="OrthoDB" id="434648at2759"/>
<dbReference type="Proteomes" id="UP000002530">
    <property type="component" value="Chromosome 6"/>
</dbReference>
<dbReference type="GO" id="GO:0005524">
    <property type="term" value="F:ATP binding"/>
    <property type="evidence" value="ECO:0007669"/>
    <property type="project" value="UniProtKB-KW"/>
</dbReference>
<dbReference type="GO" id="GO:0016874">
    <property type="term" value="F:ligase activity"/>
    <property type="evidence" value="ECO:0007669"/>
    <property type="project" value="UniProtKB-KW"/>
</dbReference>
<dbReference type="GO" id="GO:0046872">
    <property type="term" value="F:metal ion binding"/>
    <property type="evidence" value="ECO:0007669"/>
    <property type="project" value="UniProtKB-KW"/>
</dbReference>
<dbReference type="Gene3D" id="3.40.50.20">
    <property type="match status" value="1"/>
</dbReference>
<dbReference type="Gene3D" id="3.30.1490.20">
    <property type="entry name" value="ATP-grasp fold, A domain"/>
    <property type="match status" value="1"/>
</dbReference>
<dbReference type="Gene3D" id="3.30.470.20">
    <property type="entry name" value="ATP-grasp fold, B domain"/>
    <property type="match status" value="1"/>
</dbReference>
<dbReference type="InterPro" id="IPR052032">
    <property type="entry name" value="ATP-dep_AA_Ligase"/>
</dbReference>
<dbReference type="InterPro" id="IPR011761">
    <property type="entry name" value="ATP-grasp"/>
</dbReference>
<dbReference type="InterPro" id="IPR013815">
    <property type="entry name" value="ATP_grasp_subdomain_1"/>
</dbReference>
<dbReference type="InterPro" id="IPR041472">
    <property type="entry name" value="BL00235/CARNS1_N"/>
</dbReference>
<dbReference type="PANTHER" id="PTHR43585:SF2">
    <property type="entry name" value="ATP-GRASP ENZYME FSQD"/>
    <property type="match status" value="1"/>
</dbReference>
<dbReference type="PANTHER" id="PTHR43585">
    <property type="entry name" value="FUMIPYRROLE BIOSYNTHESIS PROTEIN C"/>
    <property type="match status" value="1"/>
</dbReference>
<dbReference type="Pfam" id="PF13535">
    <property type="entry name" value="ATP-grasp_4"/>
    <property type="match status" value="1"/>
</dbReference>
<dbReference type="Pfam" id="PF18130">
    <property type="entry name" value="ATPgrasp_N"/>
    <property type="match status" value="1"/>
</dbReference>
<dbReference type="SUPFAM" id="SSF56059">
    <property type="entry name" value="Glutathione synthetase ATP-binding domain-like"/>
    <property type="match status" value="1"/>
</dbReference>
<dbReference type="PROSITE" id="PS50975">
    <property type="entry name" value="ATP_GRASP"/>
    <property type="match status" value="1"/>
</dbReference>
<gene>
    <name evidence="6" type="primary">fsqD</name>
    <name evidence="5" type="synonym">fmpC</name>
    <name type="ORF">AFUA_6G03460</name>
</gene>
<feature type="chain" id="PRO_0000438871" description="ATP-grasp enzyme fsqD">
    <location>
        <begin position="1"/>
        <end position="574"/>
    </location>
</feature>
<feature type="domain" description="ATP-grasp" evidence="1">
    <location>
        <begin position="234"/>
        <end position="462"/>
    </location>
</feature>
<feature type="binding site" evidence="1">
    <location>
        <begin position="263"/>
        <end position="318"/>
    </location>
    <ligand>
        <name>ATP</name>
        <dbReference type="ChEBI" id="CHEBI:30616"/>
    </ligand>
</feature>
<feature type="binding site" evidence="1">
    <location>
        <position position="394"/>
    </location>
    <ligand>
        <name>Mg(2+)</name>
        <dbReference type="ChEBI" id="CHEBI:18420"/>
        <label>1</label>
    </ligand>
</feature>
<feature type="binding site" evidence="1">
    <location>
        <position position="394"/>
    </location>
    <ligand>
        <name>Mn(2+)</name>
        <dbReference type="ChEBI" id="CHEBI:29035"/>
        <label>1</label>
    </ligand>
</feature>
<feature type="binding site" evidence="1">
    <location>
        <position position="431"/>
    </location>
    <ligand>
        <name>Mg(2+)</name>
        <dbReference type="ChEBI" id="CHEBI:18420"/>
        <label>1</label>
    </ligand>
</feature>
<feature type="binding site" evidence="1">
    <location>
        <position position="431"/>
    </location>
    <ligand>
        <name>Mg(2+)</name>
        <dbReference type="ChEBI" id="CHEBI:18420"/>
        <label>2</label>
    </ligand>
</feature>
<feature type="binding site" evidence="1">
    <location>
        <position position="431"/>
    </location>
    <ligand>
        <name>Mn(2+)</name>
        <dbReference type="ChEBI" id="CHEBI:29035"/>
        <label>1</label>
    </ligand>
</feature>
<feature type="binding site" evidence="1">
    <location>
        <position position="431"/>
    </location>
    <ligand>
        <name>Mn(2+)</name>
        <dbReference type="ChEBI" id="CHEBI:29035"/>
        <label>2</label>
    </ligand>
</feature>
<feature type="binding site" evidence="1">
    <location>
        <position position="433"/>
    </location>
    <ligand>
        <name>Mg(2+)</name>
        <dbReference type="ChEBI" id="CHEBI:18420"/>
        <label>2</label>
    </ligand>
</feature>
<feature type="binding site" evidence="1">
    <location>
        <position position="433"/>
    </location>
    <ligand>
        <name>Mn(2+)</name>
        <dbReference type="ChEBI" id="CHEBI:29035"/>
        <label>2</label>
    </ligand>
</feature>
<comment type="function">
    <text evidence="2 3 4 8">ATP-grasp enzyme; part of the gene cluster that mediates the biosynthesis of the isoquinoline alkaloids fumisoquin A, fumisoquin B and fumisoquin C; as well as small amounts of fumipyrrole as a shunt metabolite (PubMed:25582336, PubMed:27065235). The products of the cluster lead to a brown coloration and are important for growth and conidiation (PubMed:25582336). The nonribosomal peptide synthetase-like protein fsqF, which lacks a canonical condensation domain, is required for addition of a serine-derived dehydroalanine moiety to activated tyrosine but is not essential for the subsequent steps leading to isoquinoline formation (PubMed:27065235). A different enzyme, most likely the ATP-grasp enzyme fsqD, is responsible for activation of tyrosine (Probable). Three additional enzymes encoded by the fsq cluster, the N-methyltransferase fsqC, the phenol 2-monooxygenase fsqG and the FAD-dependent oxidase fsqB, catalyze the formation of the isoquinoline ring system in the fumisoquins (PubMed:27065235, PubMed:30194285). FsqB converts the fspF thiolation domain-bound (2S,4S,5S)-2-amino-6-(3,4-dihydroxyphenyl)-4-hydroxy-5-(methylamino)hexanoyl into isoquinoline (PubMed:27065235, PubMed:30194285). The cyclization most likely proceeds via a two-step mechanism, beginning with FAD-dependent oxidation of the methyl group to an iminium species followed by electrophilic attack on the deprotonated phenol (Probable).</text>
</comment>
<comment type="cofactor">
    <cofactor evidence="1">
        <name>Mg(2+)</name>
        <dbReference type="ChEBI" id="CHEBI:18420"/>
    </cofactor>
    <cofactor evidence="1">
        <name>Mn(2+)</name>
        <dbReference type="ChEBI" id="CHEBI:29035"/>
    </cofactor>
    <text evidence="1">Binds 2 magnesium or manganese ions per subunit.</text>
</comment>
<comment type="pathway">
    <text evidence="7">Secondary metabolite biosynthesis.</text>
</comment>
<comment type="induction">
    <text evidence="2 3">Expression is positively regulated by the fumisoquins biosynthesis specific transcription factor fsqA (PubMed:25582336).</text>
</comment>
<sequence length="574" mass="63462">MLRASASGAKCAVKLIVPLHRGFIVRSDIIPLRLRDSEYVESAVSFAEPLQTYSGKKVAISSRSDLTTYFAAAAAGLILRQGSTHASDAGSQALFQMVESDLANRLSFPWIQPGTPRRRTLALVDANSSHPQDGLGFYRAARELGINVVVLENAGHWLEDPAQAHWREAFIPTRLTNPPEEDVGDHILASLRAYGKPVDGIVTFADSFWYYIARIAHEIGVETAPPDSMRIATNKFLTSKYVGHDAYLASNVDEALRIAKEVALPYPLIVKPCDGWSSEGVSRVESPDAFPAAVKSIDTSRHGTEFVMEPYCDGPEVDVNLVLLDGEVLFAEICDDLPKSADVNGLTVGSLTNFHELYSVYPSALPSKELELLIHSFVDTLLRLGIRNGVMHLEGRVQNSSMEYREQNRMMHLQPRAPQATRPEPSAWLIEINPRPLGMTGSHIIESTYGIDYWGLAAVLGVGDKDRARALSQPYRDGPQYTCVMVFIPADFPPSSQGIFDTDDICADLLARRPDLAQHISRCATLVRRGQKVAHPTTGRHTFLAYFNVFSRAGREEALDLARQVREEVRYSFL</sequence>
<evidence type="ECO:0000255" key="1">
    <source>
        <dbReference type="PROSITE-ProRule" id="PRU00409"/>
    </source>
</evidence>
<evidence type="ECO:0000269" key="2">
    <source>
    </source>
</evidence>
<evidence type="ECO:0000269" key="3">
    <source>
    </source>
</evidence>
<evidence type="ECO:0000269" key="4">
    <source>
    </source>
</evidence>
<evidence type="ECO:0000303" key="5">
    <source>
    </source>
</evidence>
<evidence type="ECO:0000303" key="6">
    <source>
    </source>
</evidence>
<evidence type="ECO:0000305" key="7">
    <source>
    </source>
</evidence>
<evidence type="ECO:0000305" key="8">
    <source>
    </source>
</evidence>
<proteinExistence type="evidence at transcript level"/>
<protein>
    <recommendedName>
        <fullName evidence="6">ATP-grasp enzyme fsqD</fullName>
        <ecNumber evidence="8">6.3.2.-</ecNumber>
    </recommendedName>
    <alternativeName>
        <fullName evidence="5">Fumipyrrole biosynthesis protein C</fullName>
    </alternativeName>
    <alternativeName>
        <fullName evidence="6">Fumisoquins biosynthesis protein D</fullName>
    </alternativeName>
</protein>
<name>FSQD_ASPFU</name>